<accession>Q9SEE5</accession>
<accession>O24021</accession>
<accession>O48936</accession>
<dbReference type="EC" id="2.7.1.6"/>
<dbReference type="EMBL" id="X99851">
    <property type="protein sequence ID" value="CAA68163.1"/>
    <property type="molecule type" value="mRNA"/>
</dbReference>
<dbReference type="EMBL" id="AF024623">
    <property type="protein sequence ID" value="AAB94084.1"/>
    <property type="molecule type" value="mRNA"/>
</dbReference>
<dbReference type="EMBL" id="AF152851">
    <property type="protein sequence ID" value="AAF15552.1"/>
    <property type="molecule type" value="Genomic_DNA"/>
</dbReference>
<dbReference type="EMBL" id="AC020580">
    <property type="protein sequence ID" value="AAG51339.1"/>
    <property type="molecule type" value="Genomic_DNA"/>
</dbReference>
<dbReference type="EMBL" id="CP002686">
    <property type="protein sequence ID" value="AEE74417.1"/>
    <property type="molecule type" value="Genomic_DNA"/>
</dbReference>
<dbReference type="EMBL" id="AY136356">
    <property type="protein sequence ID" value="AAM97022.1"/>
    <property type="molecule type" value="mRNA"/>
</dbReference>
<dbReference type="EMBL" id="BT010374">
    <property type="protein sequence ID" value="AAQ56817.1"/>
    <property type="molecule type" value="mRNA"/>
</dbReference>
<dbReference type="PIR" id="T51592">
    <property type="entry name" value="T51592"/>
</dbReference>
<dbReference type="RefSeq" id="NP_187310.1">
    <property type="nucleotide sequence ID" value="NM_111534.4"/>
</dbReference>
<dbReference type="SMR" id="Q9SEE5"/>
<dbReference type="BioGRID" id="5172">
    <property type="interactions" value="2"/>
</dbReference>
<dbReference type="FunCoup" id="Q9SEE5">
    <property type="interactions" value="4251"/>
</dbReference>
<dbReference type="IntAct" id="Q9SEE5">
    <property type="interactions" value="2"/>
</dbReference>
<dbReference type="STRING" id="3702.Q9SEE5"/>
<dbReference type="GlyGen" id="Q9SEE5">
    <property type="glycosylation" value="1 site"/>
</dbReference>
<dbReference type="iPTMnet" id="Q9SEE5"/>
<dbReference type="PaxDb" id="3702-AT3G06580.1"/>
<dbReference type="ProteomicsDB" id="228755"/>
<dbReference type="EnsemblPlants" id="AT3G06580.1">
    <property type="protein sequence ID" value="AT3G06580.1"/>
    <property type="gene ID" value="AT3G06580"/>
</dbReference>
<dbReference type="GeneID" id="819837"/>
<dbReference type="Gramene" id="AT3G06580.1">
    <property type="protein sequence ID" value="AT3G06580.1"/>
    <property type="gene ID" value="AT3G06580"/>
</dbReference>
<dbReference type="KEGG" id="ath:AT3G06580"/>
<dbReference type="Araport" id="AT3G06580"/>
<dbReference type="TAIR" id="AT3G06580">
    <property type="gene designation" value="GALK"/>
</dbReference>
<dbReference type="eggNOG" id="KOG0631">
    <property type="taxonomic scope" value="Eukaryota"/>
</dbReference>
<dbReference type="HOGENOM" id="CLU_017814_6_2_1"/>
<dbReference type="InParanoid" id="Q9SEE5"/>
<dbReference type="OMA" id="GFHDTYF"/>
<dbReference type="PhylomeDB" id="Q9SEE5"/>
<dbReference type="BioCyc" id="ARA:AT1G64440-MONOMER"/>
<dbReference type="BioCyc" id="ARA:AT3G06580-MONOMER"/>
<dbReference type="BioCyc" id="MetaCyc:AT3G06580-MONOMER"/>
<dbReference type="UniPathway" id="UPA00214"/>
<dbReference type="PRO" id="PR:Q9SEE5"/>
<dbReference type="Proteomes" id="UP000006548">
    <property type="component" value="Chromosome 3"/>
</dbReference>
<dbReference type="ExpressionAtlas" id="Q9SEE5">
    <property type="expression patterns" value="baseline and differential"/>
</dbReference>
<dbReference type="GO" id="GO:0005829">
    <property type="term" value="C:cytosol"/>
    <property type="evidence" value="ECO:0007005"/>
    <property type="project" value="TAIR"/>
</dbReference>
<dbReference type="GO" id="GO:0005524">
    <property type="term" value="F:ATP binding"/>
    <property type="evidence" value="ECO:0007669"/>
    <property type="project" value="UniProtKB-KW"/>
</dbReference>
<dbReference type="GO" id="GO:0004335">
    <property type="term" value="F:galactokinase activity"/>
    <property type="evidence" value="ECO:0000314"/>
    <property type="project" value="TAIR"/>
</dbReference>
<dbReference type="GO" id="GO:0046872">
    <property type="term" value="F:metal ion binding"/>
    <property type="evidence" value="ECO:0007669"/>
    <property type="project" value="UniProtKB-KW"/>
</dbReference>
<dbReference type="GO" id="GO:0046835">
    <property type="term" value="P:carbohydrate phosphorylation"/>
    <property type="evidence" value="ECO:0000314"/>
    <property type="project" value="TAIR"/>
</dbReference>
<dbReference type="GO" id="GO:0006012">
    <property type="term" value="P:galactose metabolic process"/>
    <property type="evidence" value="ECO:0000314"/>
    <property type="project" value="TAIR"/>
</dbReference>
<dbReference type="FunFam" id="1.20.1440.340:FF:000002">
    <property type="entry name" value="Galactokinase"/>
    <property type="match status" value="1"/>
</dbReference>
<dbReference type="FunFam" id="3.30.230.10:FF:000046">
    <property type="entry name" value="galactokinase-like isoform X1"/>
    <property type="match status" value="1"/>
</dbReference>
<dbReference type="Gene3D" id="1.20.1440.340">
    <property type="match status" value="1"/>
</dbReference>
<dbReference type="Gene3D" id="3.30.230.10">
    <property type="match status" value="1"/>
</dbReference>
<dbReference type="Gene3D" id="3.30.70.3170">
    <property type="match status" value="1"/>
</dbReference>
<dbReference type="InterPro" id="IPR000705">
    <property type="entry name" value="Galactokinase"/>
</dbReference>
<dbReference type="InterPro" id="IPR019741">
    <property type="entry name" value="Galactokinase_CS"/>
</dbReference>
<dbReference type="InterPro" id="IPR019539">
    <property type="entry name" value="GalKase_N"/>
</dbReference>
<dbReference type="InterPro" id="IPR013750">
    <property type="entry name" value="GHMP_kinase_C_dom"/>
</dbReference>
<dbReference type="InterPro" id="IPR036554">
    <property type="entry name" value="GHMP_kinase_C_sf"/>
</dbReference>
<dbReference type="InterPro" id="IPR006204">
    <property type="entry name" value="GHMP_kinase_N_dom"/>
</dbReference>
<dbReference type="InterPro" id="IPR006203">
    <property type="entry name" value="GHMP_knse_ATP-bd_CS"/>
</dbReference>
<dbReference type="InterPro" id="IPR006206">
    <property type="entry name" value="Mevalonate/galactokinase"/>
</dbReference>
<dbReference type="InterPro" id="IPR020568">
    <property type="entry name" value="Ribosomal_Su5_D2-typ_SF"/>
</dbReference>
<dbReference type="InterPro" id="IPR014721">
    <property type="entry name" value="Ribsml_uS5_D2-typ_fold_subgr"/>
</dbReference>
<dbReference type="NCBIfam" id="TIGR00131">
    <property type="entry name" value="gal_kin"/>
    <property type="match status" value="1"/>
</dbReference>
<dbReference type="PANTHER" id="PTHR10457:SF7">
    <property type="entry name" value="GALACTOKINASE-RELATED"/>
    <property type="match status" value="1"/>
</dbReference>
<dbReference type="PANTHER" id="PTHR10457">
    <property type="entry name" value="MEVALONATE KINASE/GALACTOKINASE"/>
    <property type="match status" value="1"/>
</dbReference>
<dbReference type="Pfam" id="PF10509">
    <property type="entry name" value="GalKase_gal_bdg"/>
    <property type="match status" value="1"/>
</dbReference>
<dbReference type="Pfam" id="PF08544">
    <property type="entry name" value="GHMP_kinases_C"/>
    <property type="match status" value="1"/>
</dbReference>
<dbReference type="Pfam" id="PF00288">
    <property type="entry name" value="GHMP_kinases_N"/>
    <property type="match status" value="1"/>
</dbReference>
<dbReference type="PIRSF" id="PIRSF000530">
    <property type="entry name" value="Galactokinase"/>
    <property type="match status" value="1"/>
</dbReference>
<dbReference type="PRINTS" id="PR00473">
    <property type="entry name" value="GALCTOKINASE"/>
</dbReference>
<dbReference type="PRINTS" id="PR00959">
    <property type="entry name" value="MEVGALKINASE"/>
</dbReference>
<dbReference type="SUPFAM" id="SSF55060">
    <property type="entry name" value="GHMP Kinase, C-terminal domain"/>
    <property type="match status" value="1"/>
</dbReference>
<dbReference type="SUPFAM" id="SSF54211">
    <property type="entry name" value="Ribosomal protein S5 domain 2-like"/>
    <property type="match status" value="1"/>
</dbReference>
<dbReference type="PROSITE" id="PS00106">
    <property type="entry name" value="GALACTOKINASE"/>
    <property type="match status" value="1"/>
</dbReference>
<dbReference type="PROSITE" id="PS00627">
    <property type="entry name" value="GHMP_KINASES_ATP"/>
    <property type="match status" value="1"/>
</dbReference>
<keyword id="KW-0007">Acetylation</keyword>
<keyword id="KW-0067">ATP-binding</keyword>
<keyword id="KW-0106">Calcium</keyword>
<keyword id="KW-0119">Carbohydrate metabolism</keyword>
<keyword id="KW-0299">Galactose metabolism</keyword>
<keyword id="KW-0418">Kinase</keyword>
<keyword id="KW-0460">Magnesium</keyword>
<keyword id="KW-0464">Manganese</keyword>
<keyword id="KW-0479">Metal-binding</keyword>
<keyword id="KW-0547">Nucleotide-binding</keyword>
<keyword id="KW-1185">Reference proteome</keyword>
<keyword id="KW-0808">Transferase</keyword>
<reference key="1">
    <citation type="journal article" date="1997" name="Plant Mol. Biol.">
        <title>Isolation of a cDNA encoding an Arabidopsis galactokinase by functional expression in yeast.</title>
        <authorList>
            <person name="Kaplan C.P."/>
            <person name="Tugal H.B."/>
            <person name="Baker A."/>
        </authorList>
    </citation>
    <scope>NUCLEOTIDE SEQUENCE [MRNA]</scope>
    <scope>FUNCTION</scope>
    <source>
        <strain>cv. Landsberg erecta</strain>
    </source>
</reference>
<reference key="2">
    <citation type="journal article" date="1999" name="Plant Mol. Biol.">
        <title>The arabinose kinase, ARA1, gene of Arabidopsis is a novel member of the galactose kinase gene family.</title>
        <authorList>
            <person name="Sherson S."/>
            <person name="Gy I."/>
            <person name="Medd J."/>
            <person name="Schmidt R."/>
            <person name="Dean C."/>
            <person name="Kreis M."/>
            <person name="Lecharny A."/>
            <person name="Cobbett C."/>
        </authorList>
    </citation>
    <scope>NUCLEOTIDE SEQUENCE [MRNA]</scope>
    <source>
        <strain>cv. Columbia</strain>
    </source>
</reference>
<reference key="3">
    <citation type="online journal article" date="1999" name="Plant Gene Register">
        <title>Fine structure of an Arabidopsis thaliana galactose kinase Gal1 gene.</title>
        <authorList>
            <person name="Gy I."/>
            <person name="Kreis M."/>
            <person name="Lecharny A."/>
        </authorList>
        <locator>PGR99-171</locator>
    </citation>
    <scope>NUCLEOTIDE SEQUENCE [GENOMIC DNA]</scope>
    <source>
        <strain>cv. Columbia</strain>
    </source>
</reference>
<reference key="4">
    <citation type="journal article" date="2000" name="Nature">
        <title>Sequence and analysis of chromosome 3 of the plant Arabidopsis thaliana.</title>
        <authorList>
            <person name="Salanoubat M."/>
            <person name="Lemcke K."/>
            <person name="Rieger M."/>
            <person name="Ansorge W."/>
            <person name="Unseld M."/>
            <person name="Fartmann B."/>
            <person name="Valle G."/>
            <person name="Bloecker H."/>
            <person name="Perez-Alonso M."/>
            <person name="Obermaier B."/>
            <person name="Delseny M."/>
            <person name="Boutry M."/>
            <person name="Grivell L.A."/>
            <person name="Mache R."/>
            <person name="Puigdomenech P."/>
            <person name="De Simone V."/>
            <person name="Choisne N."/>
            <person name="Artiguenave F."/>
            <person name="Robert C."/>
            <person name="Brottier P."/>
            <person name="Wincker P."/>
            <person name="Cattolico L."/>
            <person name="Weissenbach J."/>
            <person name="Saurin W."/>
            <person name="Quetier F."/>
            <person name="Schaefer M."/>
            <person name="Mueller-Auer S."/>
            <person name="Gabel C."/>
            <person name="Fuchs M."/>
            <person name="Benes V."/>
            <person name="Wurmbach E."/>
            <person name="Drzonek H."/>
            <person name="Erfle H."/>
            <person name="Jordan N."/>
            <person name="Bangert S."/>
            <person name="Wiedelmann R."/>
            <person name="Kranz H."/>
            <person name="Voss H."/>
            <person name="Holland R."/>
            <person name="Brandt P."/>
            <person name="Nyakatura G."/>
            <person name="Vezzi A."/>
            <person name="D'Angelo M."/>
            <person name="Pallavicini A."/>
            <person name="Toppo S."/>
            <person name="Simionati B."/>
            <person name="Conrad A."/>
            <person name="Hornischer K."/>
            <person name="Kauer G."/>
            <person name="Loehnert T.-H."/>
            <person name="Nordsiek G."/>
            <person name="Reichelt J."/>
            <person name="Scharfe M."/>
            <person name="Schoen O."/>
            <person name="Bargues M."/>
            <person name="Terol J."/>
            <person name="Climent J."/>
            <person name="Navarro P."/>
            <person name="Collado C."/>
            <person name="Perez-Perez A."/>
            <person name="Ottenwaelder B."/>
            <person name="Duchemin D."/>
            <person name="Cooke R."/>
            <person name="Laudie M."/>
            <person name="Berger-Llauro C."/>
            <person name="Purnelle B."/>
            <person name="Masuy D."/>
            <person name="de Haan M."/>
            <person name="Maarse A.C."/>
            <person name="Alcaraz J.-P."/>
            <person name="Cottet A."/>
            <person name="Casacuberta E."/>
            <person name="Monfort A."/>
            <person name="Argiriou A."/>
            <person name="Flores M."/>
            <person name="Liguori R."/>
            <person name="Vitale D."/>
            <person name="Mannhaupt G."/>
            <person name="Haase D."/>
            <person name="Schoof H."/>
            <person name="Rudd S."/>
            <person name="Zaccaria P."/>
            <person name="Mewes H.-W."/>
            <person name="Mayer K.F.X."/>
            <person name="Kaul S."/>
            <person name="Town C.D."/>
            <person name="Koo H.L."/>
            <person name="Tallon L.J."/>
            <person name="Jenkins J."/>
            <person name="Rooney T."/>
            <person name="Rizzo M."/>
            <person name="Walts A."/>
            <person name="Utterback T."/>
            <person name="Fujii C.Y."/>
            <person name="Shea T.P."/>
            <person name="Creasy T.H."/>
            <person name="Haas B."/>
            <person name="Maiti R."/>
            <person name="Wu D."/>
            <person name="Peterson J."/>
            <person name="Van Aken S."/>
            <person name="Pai G."/>
            <person name="Militscher J."/>
            <person name="Sellers P."/>
            <person name="Gill J.E."/>
            <person name="Feldblyum T.V."/>
            <person name="Preuss D."/>
            <person name="Lin X."/>
            <person name="Nierman W.C."/>
            <person name="Salzberg S.L."/>
            <person name="White O."/>
            <person name="Venter J.C."/>
            <person name="Fraser C.M."/>
            <person name="Kaneko T."/>
            <person name="Nakamura Y."/>
            <person name="Sato S."/>
            <person name="Kato T."/>
            <person name="Asamizu E."/>
            <person name="Sasamoto S."/>
            <person name="Kimura T."/>
            <person name="Idesawa K."/>
            <person name="Kawashima K."/>
            <person name="Kishida Y."/>
            <person name="Kiyokawa C."/>
            <person name="Kohara M."/>
            <person name="Matsumoto M."/>
            <person name="Matsuno A."/>
            <person name="Muraki A."/>
            <person name="Nakayama S."/>
            <person name="Nakazaki N."/>
            <person name="Shinpo S."/>
            <person name="Takeuchi C."/>
            <person name="Wada T."/>
            <person name="Watanabe A."/>
            <person name="Yamada M."/>
            <person name="Yasuda M."/>
            <person name="Tabata S."/>
        </authorList>
    </citation>
    <scope>NUCLEOTIDE SEQUENCE [LARGE SCALE GENOMIC DNA]</scope>
    <source>
        <strain>cv. Columbia</strain>
    </source>
</reference>
<reference key="5">
    <citation type="journal article" date="2017" name="Plant J.">
        <title>Araport11: a complete reannotation of the Arabidopsis thaliana reference genome.</title>
        <authorList>
            <person name="Cheng C.Y."/>
            <person name="Krishnakumar V."/>
            <person name="Chan A.P."/>
            <person name="Thibaud-Nissen F."/>
            <person name="Schobel S."/>
            <person name="Town C.D."/>
        </authorList>
    </citation>
    <scope>GENOME REANNOTATION</scope>
    <source>
        <strain>cv. Columbia</strain>
    </source>
</reference>
<reference key="6">
    <citation type="journal article" date="2003" name="Science">
        <title>Empirical analysis of transcriptional activity in the Arabidopsis genome.</title>
        <authorList>
            <person name="Yamada K."/>
            <person name="Lim J."/>
            <person name="Dale J.M."/>
            <person name="Chen H."/>
            <person name="Shinn P."/>
            <person name="Palm C.J."/>
            <person name="Southwick A.M."/>
            <person name="Wu H.C."/>
            <person name="Kim C.J."/>
            <person name="Nguyen M."/>
            <person name="Pham P.K."/>
            <person name="Cheuk R.F."/>
            <person name="Karlin-Newmann G."/>
            <person name="Liu S.X."/>
            <person name="Lam B."/>
            <person name="Sakano H."/>
            <person name="Wu T."/>
            <person name="Yu G."/>
            <person name="Miranda M."/>
            <person name="Quach H.L."/>
            <person name="Tripp M."/>
            <person name="Chang C.H."/>
            <person name="Lee J.M."/>
            <person name="Toriumi M.J."/>
            <person name="Chan M.M."/>
            <person name="Tang C.C."/>
            <person name="Onodera C.S."/>
            <person name="Deng J.M."/>
            <person name="Akiyama K."/>
            <person name="Ansari Y."/>
            <person name="Arakawa T."/>
            <person name="Banh J."/>
            <person name="Banno F."/>
            <person name="Bowser L."/>
            <person name="Brooks S.Y."/>
            <person name="Carninci P."/>
            <person name="Chao Q."/>
            <person name="Choy N."/>
            <person name="Enju A."/>
            <person name="Goldsmith A.D."/>
            <person name="Gurjal M."/>
            <person name="Hansen N.F."/>
            <person name="Hayashizaki Y."/>
            <person name="Johnson-Hopson C."/>
            <person name="Hsuan V.W."/>
            <person name="Iida K."/>
            <person name="Karnes M."/>
            <person name="Khan S."/>
            <person name="Koesema E."/>
            <person name="Ishida J."/>
            <person name="Jiang P.X."/>
            <person name="Jones T."/>
            <person name="Kawai J."/>
            <person name="Kamiya A."/>
            <person name="Meyers C."/>
            <person name="Nakajima M."/>
            <person name="Narusaka M."/>
            <person name="Seki M."/>
            <person name="Sakurai T."/>
            <person name="Satou M."/>
            <person name="Tamse R."/>
            <person name="Vaysberg M."/>
            <person name="Wallender E.K."/>
            <person name="Wong C."/>
            <person name="Yamamura Y."/>
            <person name="Yuan S."/>
            <person name="Shinozaki K."/>
            <person name="Davis R.W."/>
            <person name="Theologis A."/>
            <person name="Ecker J.R."/>
        </authorList>
    </citation>
    <scope>NUCLEOTIDE SEQUENCE [LARGE SCALE MRNA]</scope>
    <source>
        <strain>cv. Columbia</strain>
    </source>
</reference>
<reference key="7">
    <citation type="journal article" date="2009" name="J. Biol. Chem.">
        <title>Identification of galacturonic acid-1-phosphate kinase, a new member of the GHMP kinase superfamily in plants, and comparison with galactose-1-phosphate kinase.</title>
        <authorList>
            <person name="Yang T."/>
            <person name="Bar-Peled L."/>
            <person name="Gebhart L."/>
            <person name="Lee S.G."/>
            <person name="Bar-Peled M."/>
        </authorList>
    </citation>
    <scope>FUNCTION</scope>
    <scope>CATALYTIC ACTIVITY</scope>
    <scope>COFACTOR</scope>
    <scope>BIOPHYSICOCHEMICAL PROPERTIES</scope>
    <scope>MUTAGENESIS OF GLU-62; SER-206; TYR-262 AND ALA-437</scope>
    <scope>TISSUE SPECIFICITY</scope>
</reference>
<reference key="8">
    <citation type="journal article" date="2012" name="Mol. Cell. Proteomics">
        <title>Comparative large-scale characterisation of plant vs. mammal proteins reveals similar and idiosyncratic N-alpha acetylation features.</title>
        <authorList>
            <person name="Bienvenut W.V."/>
            <person name="Sumpton D."/>
            <person name="Martinez A."/>
            <person name="Lilla S."/>
            <person name="Espagne C."/>
            <person name="Meinnel T."/>
            <person name="Giglione C."/>
        </authorList>
    </citation>
    <scope>ACETYLATION [LARGE SCALE ANALYSIS] AT ALA-2</scope>
    <scope>CLEAVAGE OF INITIATOR METHIONINE [LARGE SCALE ANALYSIS]</scope>
    <scope>IDENTIFICATION BY MASS SPECTROMETRY [LARGE SCALE ANALYSIS]</scope>
</reference>
<evidence type="ECO:0000250" key="1">
    <source>
        <dbReference type="UniProtKB" id="P04385"/>
    </source>
</evidence>
<evidence type="ECO:0000250" key="2">
    <source>
        <dbReference type="UniProtKB" id="Q9HHB6"/>
    </source>
</evidence>
<evidence type="ECO:0000269" key="3">
    <source>
    </source>
</evidence>
<evidence type="ECO:0000269" key="4">
    <source>
    </source>
</evidence>
<evidence type="ECO:0000305" key="5"/>
<evidence type="ECO:0007744" key="6">
    <source>
    </source>
</evidence>
<protein>
    <recommendedName>
        <fullName>Galactokinase</fullName>
        <ecNumber>2.7.1.6</ecNumber>
    </recommendedName>
    <alternativeName>
        <fullName>Galactose kinase</fullName>
    </alternativeName>
</protein>
<gene>
    <name type="primary">GAL1</name>
    <name type="synonym">GALK</name>
    <name type="ordered locus">At3g06580</name>
    <name type="ORF">F5E6.9</name>
</gene>
<name>GALK1_ARATH</name>
<proteinExistence type="evidence at protein level"/>
<organism>
    <name type="scientific">Arabidopsis thaliana</name>
    <name type="common">Mouse-ear cress</name>
    <dbReference type="NCBI Taxonomy" id="3702"/>
    <lineage>
        <taxon>Eukaryota</taxon>
        <taxon>Viridiplantae</taxon>
        <taxon>Streptophyta</taxon>
        <taxon>Embryophyta</taxon>
        <taxon>Tracheophyta</taxon>
        <taxon>Spermatophyta</taxon>
        <taxon>Magnoliopsida</taxon>
        <taxon>eudicotyledons</taxon>
        <taxon>Gunneridae</taxon>
        <taxon>Pentapetalae</taxon>
        <taxon>rosids</taxon>
        <taxon>malvids</taxon>
        <taxon>Brassicales</taxon>
        <taxon>Brassicaceae</taxon>
        <taxon>Camelineae</taxon>
        <taxon>Arabidopsis</taxon>
    </lineage>
</organism>
<feature type="initiator methionine" description="Removed" evidence="6">
    <location>
        <position position="1"/>
    </location>
</feature>
<feature type="chain" id="PRO_0000184651" description="Galactokinase">
    <location>
        <begin position="2"/>
        <end position="496"/>
    </location>
</feature>
<feature type="active site" description="Proton acceptor" evidence="2">
    <location>
        <position position="210"/>
    </location>
</feature>
<feature type="binding site" evidence="1">
    <location>
        <position position="56"/>
    </location>
    <ligand>
        <name>alpha-D-galactose</name>
        <dbReference type="ChEBI" id="CHEBI:28061"/>
    </ligand>
</feature>
<feature type="binding site" evidence="1">
    <location>
        <position position="62"/>
    </location>
    <ligand>
        <name>alpha-D-galactose</name>
        <dbReference type="ChEBI" id="CHEBI:28061"/>
    </ligand>
</feature>
<feature type="binding site" evidence="1">
    <location>
        <position position="63"/>
    </location>
    <ligand>
        <name>alpha-D-galactose</name>
        <dbReference type="ChEBI" id="CHEBI:28061"/>
    </ligand>
</feature>
<feature type="binding site" evidence="1">
    <location>
        <position position="65"/>
    </location>
    <ligand>
        <name>alpha-D-galactose</name>
        <dbReference type="ChEBI" id="CHEBI:28061"/>
    </ligand>
</feature>
<feature type="binding site" evidence="1">
    <location>
        <position position="161"/>
    </location>
    <ligand>
        <name>ATP</name>
        <dbReference type="ChEBI" id="CHEBI:30616"/>
    </ligand>
</feature>
<feature type="binding site" evidence="1">
    <location>
        <position position="163"/>
    </location>
    <ligand>
        <name>ATP</name>
        <dbReference type="ChEBI" id="CHEBI:30616"/>
    </ligand>
</feature>
<feature type="binding site" evidence="1">
    <location>
        <position position="165"/>
    </location>
    <ligand>
        <name>ATP</name>
        <dbReference type="ChEBI" id="CHEBI:30616"/>
    </ligand>
</feature>
<feature type="binding site" evidence="1">
    <location>
        <position position="166"/>
    </location>
    <ligand>
        <name>ATP</name>
        <dbReference type="ChEBI" id="CHEBI:30616"/>
    </ligand>
</feature>
<feature type="binding site" evidence="1">
    <location>
        <position position="210"/>
    </location>
    <ligand>
        <name>alpha-D-galactose</name>
        <dbReference type="ChEBI" id="CHEBI:28061"/>
    </ligand>
</feature>
<feature type="binding site" evidence="1">
    <location>
        <position position="252"/>
    </location>
    <ligand>
        <name>ATP</name>
        <dbReference type="ChEBI" id="CHEBI:30616"/>
    </ligand>
</feature>
<feature type="binding site" evidence="1">
    <location>
        <position position="253"/>
    </location>
    <ligand>
        <name>ATP</name>
        <dbReference type="ChEBI" id="CHEBI:30616"/>
    </ligand>
</feature>
<feature type="binding site" evidence="1">
    <location>
        <position position="254"/>
    </location>
    <ligand>
        <name>ATP</name>
        <dbReference type="ChEBI" id="CHEBI:30616"/>
    </ligand>
</feature>
<feature type="binding site" evidence="1">
    <location>
        <position position="262"/>
    </location>
    <ligand>
        <name>alpha-D-galactose</name>
        <dbReference type="ChEBI" id="CHEBI:28061"/>
    </ligand>
</feature>
<feature type="site" description="Transition state stabilizer" evidence="2">
    <location>
        <position position="56"/>
    </location>
</feature>
<feature type="modified residue" description="N-acetylalanine" evidence="6">
    <location>
        <position position="2"/>
    </location>
</feature>
<feature type="mutagenesis site" description="Loss of activity." evidence="3">
    <original>E</original>
    <variation>A</variation>
    <location>
        <position position="62"/>
    </location>
</feature>
<feature type="mutagenesis site" description="Decreased specificity and phosphorylation of GalNAc." evidence="3">
    <original>S</original>
    <variation>G</variation>
    <location>
        <position position="206"/>
    </location>
</feature>
<feature type="mutagenesis site" description="No effect on specificity or activity." evidence="3">
    <original>Y</original>
    <variation>F</variation>
    <location>
        <position position="262"/>
    </location>
</feature>
<feature type="mutagenesis site" description="Reduced phosphorylation activity." evidence="3">
    <original>A</original>
    <variation>S</variation>
    <location>
        <position position="437"/>
    </location>
</feature>
<feature type="sequence conflict" description="In Ref. 1; CAA68163." evidence="5" ref="1">
    <original>IILGVKLGMEPKEAISKVKTLSDVEGLCVSF</original>
    <variation>DQYLVLSSEWNQKKQYQKLRLFLMWRDYVCHS</variation>
    <location>
        <begin position="274"/>
        <end position="304"/>
    </location>
</feature>
<feature type="sequence conflict" description="In Ref. 2; AAB94084." evidence="5" ref="2">
    <original>A</original>
    <variation>T</variation>
    <location>
        <position position="351"/>
    </location>
</feature>
<feature type="sequence conflict" description="In Ref. 1; CAA68163." evidence="5" ref="1">
    <original>S</original>
    <variation>T</variation>
    <location>
        <position position="402"/>
    </location>
</feature>
<feature type="sequence conflict" description="In Ref. 3; AAF15552." evidence="5" ref="3">
    <original>A</original>
    <variation>P</variation>
    <location>
        <position position="429"/>
    </location>
</feature>
<feature type="sequence conflict" description="In Ref. 1; CAA68163." evidence="5" ref="1">
    <original>YK</original>
    <variation>HN</variation>
    <location>
        <begin position="464"/>
        <end position="465"/>
    </location>
</feature>
<feature type="sequence conflict" description="In Ref. 1; CAA68163." evidence="5" ref="1">
    <original>A</original>
    <variation>G</variation>
    <location>
        <position position="484"/>
    </location>
</feature>
<feature type="sequence conflict" description="In Ref. 1; CAA68163." evidence="5" ref="1">
    <original>A</original>
    <variation>S</variation>
    <location>
        <position position="491"/>
    </location>
</feature>
<sequence>MAKPEEVSVPIFTSLEPVYGEGSLLQEATQRFDVLKANFNDVFGASPQLFARSPGRVNLIGEHIDYEGYSVLPMAIRQDTIIAIRKCEDQKQLRIANVNDKYTMCTYPADPDQEIDLKNHKWGHYFICAYKGFHEYAKSKGVNLGSPVGLDVLVDGIVPTGSGLSSSAAFVCSATIAIMAVFGHNFEKKELAQLTCECERHIGTQSGGMDQAISIMAKTGFAELIDFNPVRATDVKLPDGGSFVIAHSLAESQKAVTAAKNYNNRVVECRLASIILGVKLGMEPKEAISKVKTLSDVEGLCVSFAGDRGSSDPLLAVKEYLKEEPYTAEEIEKILEEKLPSIVNNDPTSLAVLNAATHFKLHQRAAHVYSEARRVHGFKDTVNSNLSDEEKLKKLGDLMNESHYSCSVLYECSCPELEELVQVCKENGALGARLTGAGWGGCAVALVKEFDVTQFIPAVKEKYYKKRVEKGVVKKEDMELYLFASKPSSGAAIFNL</sequence>
<comment type="function">
    <text evidence="3 4">Sugar-1-kinase with a very high substrate specificity for the alpha-anomeric configuration of D-galacose (D-Gal). Also efficiently converts 2-deoxy-D-Gal to 2-deoxy-D-al-1-phosphate.</text>
</comment>
<comment type="catalytic activity">
    <reaction evidence="3">
        <text>alpha-D-galactose + ATP = alpha-D-galactose 1-phosphate + ADP + H(+)</text>
        <dbReference type="Rhea" id="RHEA:13553"/>
        <dbReference type="ChEBI" id="CHEBI:15378"/>
        <dbReference type="ChEBI" id="CHEBI:28061"/>
        <dbReference type="ChEBI" id="CHEBI:30616"/>
        <dbReference type="ChEBI" id="CHEBI:58336"/>
        <dbReference type="ChEBI" id="CHEBI:456216"/>
        <dbReference type="EC" id="2.7.1.6"/>
    </reaction>
</comment>
<comment type="cofactor">
    <cofactor evidence="3">
        <name>Mg(2+)</name>
        <dbReference type="ChEBI" id="CHEBI:18420"/>
    </cofactor>
    <cofactor evidence="3">
        <name>Mn(2+)</name>
        <dbReference type="ChEBI" id="CHEBI:29035"/>
    </cofactor>
    <cofactor evidence="3">
        <name>Ca(2+)</name>
        <dbReference type="ChEBI" id="CHEBI:29108"/>
    </cofactor>
    <text evidence="3">Magnesium. Can also use other divalent cations like manganese or calcium.</text>
</comment>
<comment type="biophysicochemical properties">
    <kinetics>
        <KM evidence="3">701 uM for D-galactose</KM>
        <KM evidence="3">701 uM for ATP</KM>
        <Vmax evidence="3">3.5 umol/min/ug enzyme toward D-galactose</Vmax>
        <Vmax evidence="3">3.3 umol/min/ug enzyme toward ATP</Vmax>
    </kinetics>
    <phDependence>
        <text evidence="3">Optimum pH is 7-8.</text>
    </phDependence>
    <temperatureDependence>
        <text evidence="3">Optimum temperature is 30-42 degrees Celsius.</text>
    </temperatureDependence>
</comment>
<comment type="pathway">
    <text>Carbohydrate metabolism; galactose metabolism.</text>
</comment>
<comment type="tissue specificity">
    <text evidence="3">Expressed in roots, stems, leaves, flowers and young siliques. Higher expression in the elongating middle stem region than in the lower or upper stem region.</text>
</comment>
<comment type="similarity">
    <text evidence="5">Belongs to the GHMP kinase family. GalK subfamily.</text>
</comment>